<gene>
    <name type="primary">CSE4</name>
    <name type="ordered locus">KLLA0C12529g</name>
</gene>
<comment type="function">
    <text evidence="1">Histone H3-like nucleosomal protein that is specifically found in centromeric nucleosomes. Replaces conventional H3 in the nucleosome core of centromeric chromatin that serves as an assembly site for the inner kinetochore. Required for recruitment and assembly of kinetochore proteins, mitotic progression and chromosome segregation. May serve as an epigenetic mark that propagates centromere identity through replication and cell division (By similarity).</text>
</comment>
<comment type="subunit">
    <text evidence="1">Component of centromeric nucleosomes, where DNA is wrapped around a histone octamer core. The octamer contains two molecules each of H2A, H2B, CSE4/CENPA and H4 assembled in one CSE4-H4 heterotetramer and two H2A-H2B heterodimers. Interacts with the inner kinetochore.</text>
</comment>
<comment type="interaction">
    <interactant intactId="EBI-15928212">
        <id>Q6CTI2</id>
    </interactant>
    <interactant intactId="EBI-15928236">
        <id>Q6CMU6</id>
        <label>KLLA0_E17601g</label>
    </interactant>
    <organismsDiffer>false</organismsDiffer>
    <experiments>4</experiments>
</comment>
<comment type="subcellular location">
    <subcellularLocation>
        <location evidence="1">Nucleus</location>
    </subcellularLocation>
    <subcellularLocation>
        <location evidence="1">Chromosome</location>
        <location evidence="1">Centromere</location>
    </subcellularLocation>
</comment>
<comment type="PTM">
    <text evidence="1">Ubiquitinated. Is degraded through ubiquitin-mediated proteolysis when not protected by its association to the kinetochore.</text>
</comment>
<comment type="similarity">
    <text evidence="3">Belongs to the histone H3 family.</text>
</comment>
<dbReference type="EMBL" id="CR382123">
    <property type="protein sequence ID" value="CAH01608.1"/>
    <property type="molecule type" value="Genomic_DNA"/>
</dbReference>
<dbReference type="RefSeq" id="XP_452757.1">
    <property type="nucleotide sequence ID" value="XM_452757.1"/>
</dbReference>
<dbReference type="PDB" id="2YFV">
    <property type="method" value="X-ray"/>
    <property type="resolution" value="2.32 A"/>
    <property type="chains" value="A=81-180"/>
</dbReference>
<dbReference type="PDB" id="2YFW">
    <property type="method" value="X-ray"/>
    <property type="resolution" value="2.60 A"/>
    <property type="chains" value="A/C/E/G=93-184"/>
</dbReference>
<dbReference type="PDBsum" id="2YFV"/>
<dbReference type="PDBsum" id="2YFW"/>
<dbReference type="SMR" id="Q6CTI2"/>
<dbReference type="DIP" id="DIP-60345N"/>
<dbReference type="FunCoup" id="Q6CTI2">
    <property type="interactions" value="379"/>
</dbReference>
<dbReference type="IntAct" id="Q6CTI2">
    <property type="interactions" value="2"/>
</dbReference>
<dbReference type="STRING" id="284590.Q6CTI2"/>
<dbReference type="PaxDb" id="284590-Q6CTI2"/>
<dbReference type="KEGG" id="kla:KLLA0_C12529g"/>
<dbReference type="eggNOG" id="KOG1745">
    <property type="taxonomic scope" value="Eukaryota"/>
</dbReference>
<dbReference type="HOGENOM" id="CLU_078295_3_0_1"/>
<dbReference type="InParanoid" id="Q6CTI2"/>
<dbReference type="OMA" id="KRITIMR"/>
<dbReference type="EvolutionaryTrace" id="Q6CTI2"/>
<dbReference type="Proteomes" id="UP000000598">
    <property type="component" value="Chromosome C"/>
</dbReference>
<dbReference type="GO" id="GO:0043505">
    <property type="term" value="C:CENP-A containing nucleosome"/>
    <property type="evidence" value="ECO:0000314"/>
    <property type="project" value="UniProtKB"/>
</dbReference>
<dbReference type="GO" id="GO:0005634">
    <property type="term" value="C:nucleus"/>
    <property type="evidence" value="ECO:0007669"/>
    <property type="project" value="UniProtKB-SubCell"/>
</dbReference>
<dbReference type="GO" id="GO:0003677">
    <property type="term" value="F:DNA binding"/>
    <property type="evidence" value="ECO:0007669"/>
    <property type="project" value="UniProtKB-KW"/>
</dbReference>
<dbReference type="GO" id="GO:0046982">
    <property type="term" value="F:protein heterodimerization activity"/>
    <property type="evidence" value="ECO:0007669"/>
    <property type="project" value="InterPro"/>
</dbReference>
<dbReference type="GO" id="GO:0030527">
    <property type="term" value="F:structural constituent of chromatin"/>
    <property type="evidence" value="ECO:0007669"/>
    <property type="project" value="InterPro"/>
</dbReference>
<dbReference type="CDD" id="cd22911">
    <property type="entry name" value="HFD_H3"/>
    <property type="match status" value="1"/>
</dbReference>
<dbReference type="FunFam" id="1.10.20.10:FF:000102">
    <property type="entry name" value="Histone H3-like centromeric protein CSE4"/>
    <property type="match status" value="1"/>
</dbReference>
<dbReference type="Gene3D" id="1.10.20.10">
    <property type="entry name" value="Histone, subunit A"/>
    <property type="match status" value="1"/>
</dbReference>
<dbReference type="InterPro" id="IPR009072">
    <property type="entry name" value="Histone-fold"/>
</dbReference>
<dbReference type="InterPro" id="IPR007125">
    <property type="entry name" value="Histone_H2A/H2B/H3"/>
</dbReference>
<dbReference type="InterPro" id="IPR000164">
    <property type="entry name" value="Histone_H3/CENP-A"/>
</dbReference>
<dbReference type="PANTHER" id="PTHR45810:SF17">
    <property type="entry name" value="HISTONE H3-LIKE CENTROMERIC PROTEIN A"/>
    <property type="match status" value="1"/>
</dbReference>
<dbReference type="PANTHER" id="PTHR45810">
    <property type="entry name" value="HISTONE H3.2"/>
    <property type="match status" value="1"/>
</dbReference>
<dbReference type="Pfam" id="PF00125">
    <property type="entry name" value="Histone"/>
    <property type="match status" value="1"/>
</dbReference>
<dbReference type="PRINTS" id="PR00622">
    <property type="entry name" value="HISTONEH3"/>
</dbReference>
<dbReference type="SMART" id="SM00428">
    <property type="entry name" value="H3"/>
    <property type="match status" value="1"/>
</dbReference>
<dbReference type="SUPFAM" id="SSF47113">
    <property type="entry name" value="Histone-fold"/>
    <property type="match status" value="1"/>
</dbReference>
<dbReference type="PROSITE" id="PS00959">
    <property type="entry name" value="HISTONE_H3_2"/>
    <property type="match status" value="1"/>
</dbReference>
<name>CENPA_KLULA</name>
<evidence type="ECO:0000250" key="1">
    <source>
        <dbReference type="UniProtKB" id="P36012"/>
    </source>
</evidence>
<evidence type="ECO:0000256" key="2">
    <source>
        <dbReference type="SAM" id="MobiDB-lite"/>
    </source>
</evidence>
<evidence type="ECO:0000305" key="3"/>
<evidence type="ECO:0007829" key="4">
    <source>
        <dbReference type="PDB" id="2YFV"/>
    </source>
</evidence>
<evidence type="ECO:0007829" key="5">
    <source>
        <dbReference type="PDB" id="2YFW"/>
    </source>
</evidence>
<proteinExistence type="evidence at protein level"/>
<feature type="chain" id="PRO_0000270598" description="Histone H3-like centromeric protein CSE4">
    <location>
        <begin position="1"/>
        <end position="184"/>
    </location>
</feature>
<feature type="region of interest" description="Disordered" evidence="2">
    <location>
        <begin position="54"/>
        <end position="81"/>
    </location>
</feature>
<feature type="region of interest" description="H3-like">
    <location>
        <begin position="82"/>
        <end position="182"/>
    </location>
</feature>
<feature type="compositionally biased region" description="Basic and acidic residues" evidence="2">
    <location>
        <begin position="68"/>
        <end position="80"/>
    </location>
</feature>
<feature type="helix" evidence="5">
    <location>
        <begin position="94"/>
        <end position="101"/>
    </location>
</feature>
<feature type="helix" evidence="4">
    <location>
        <begin position="110"/>
        <end position="122"/>
    </location>
</feature>
<feature type="helix" evidence="4">
    <location>
        <begin position="135"/>
        <end position="162"/>
    </location>
</feature>
<feature type="strand" evidence="4">
    <location>
        <begin position="166"/>
        <end position="168"/>
    </location>
</feature>
<feature type="helix" evidence="4">
    <location>
        <begin position="170"/>
        <end position="178"/>
    </location>
</feature>
<protein>
    <recommendedName>
        <fullName>Histone H3-like centromeric protein CSE4</fullName>
    </recommendedName>
    <alternativeName>
        <fullName>CENP-A homolog</fullName>
    </alternativeName>
    <alternativeName>
        <fullName evidence="3">CENPA homolog</fullName>
    </alternativeName>
    <alternativeName>
        <fullName>Chromosome segregation protein 4</fullName>
    </alternativeName>
</protein>
<reference key="1">
    <citation type="journal article" date="2004" name="Nature">
        <title>Genome evolution in yeasts.</title>
        <authorList>
            <person name="Dujon B."/>
            <person name="Sherman D."/>
            <person name="Fischer G."/>
            <person name="Durrens P."/>
            <person name="Casaregola S."/>
            <person name="Lafontaine I."/>
            <person name="de Montigny J."/>
            <person name="Marck C."/>
            <person name="Neuveglise C."/>
            <person name="Talla E."/>
            <person name="Goffard N."/>
            <person name="Frangeul L."/>
            <person name="Aigle M."/>
            <person name="Anthouard V."/>
            <person name="Babour A."/>
            <person name="Barbe V."/>
            <person name="Barnay S."/>
            <person name="Blanchin S."/>
            <person name="Beckerich J.-M."/>
            <person name="Beyne E."/>
            <person name="Bleykasten C."/>
            <person name="Boisrame A."/>
            <person name="Boyer J."/>
            <person name="Cattolico L."/>
            <person name="Confanioleri F."/>
            <person name="de Daruvar A."/>
            <person name="Despons L."/>
            <person name="Fabre E."/>
            <person name="Fairhead C."/>
            <person name="Ferry-Dumazet H."/>
            <person name="Groppi A."/>
            <person name="Hantraye F."/>
            <person name="Hennequin C."/>
            <person name="Jauniaux N."/>
            <person name="Joyet P."/>
            <person name="Kachouri R."/>
            <person name="Kerrest A."/>
            <person name="Koszul R."/>
            <person name="Lemaire M."/>
            <person name="Lesur I."/>
            <person name="Ma L."/>
            <person name="Muller H."/>
            <person name="Nicaud J.-M."/>
            <person name="Nikolski M."/>
            <person name="Oztas S."/>
            <person name="Ozier-Kalogeropoulos O."/>
            <person name="Pellenz S."/>
            <person name="Potier S."/>
            <person name="Richard G.-F."/>
            <person name="Straub M.-L."/>
            <person name="Suleau A."/>
            <person name="Swennen D."/>
            <person name="Tekaia F."/>
            <person name="Wesolowski-Louvel M."/>
            <person name="Westhof E."/>
            <person name="Wirth B."/>
            <person name="Zeniou-Meyer M."/>
            <person name="Zivanovic Y."/>
            <person name="Bolotin-Fukuhara M."/>
            <person name="Thierry A."/>
            <person name="Bouchier C."/>
            <person name="Caudron B."/>
            <person name="Scarpelli C."/>
            <person name="Gaillardin C."/>
            <person name="Weissenbach J."/>
            <person name="Wincker P."/>
            <person name="Souciet J.-L."/>
        </authorList>
    </citation>
    <scope>NUCLEOTIDE SEQUENCE [LARGE SCALE GENOMIC DNA]</scope>
    <source>
        <strain>ATCC 8585 / CBS 2359 / DSM 70799 / NBRC 1267 / NRRL Y-1140 / WM37</strain>
    </source>
</reference>
<sequence>MEQSIRSIDGSRSLSNVGASLIDRESINQRALQLLQRNRRRRLLLNRSEDKARYIQPERSASSQQIHPPEHHISAHERITKARGTRYKPTDLALAEIRKYQRSTDLLISRMPFARLVKEVTDQFTTESEPLRWQSMAIMALQEASEAYLVGLLEHTNLLALHAKRITIMRKDMQLARRIRGQFI</sequence>
<accession>Q6CTI2</accession>
<organism>
    <name type="scientific">Kluyveromyces lactis (strain ATCC 8585 / CBS 2359 / DSM 70799 / NBRC 1267 / NRRL Y-1140 / WM37)</name>
    <name type="common">Yeast</name>
    <name type="synonym">Candida sphaerica</name>
    <dbReference type="NCBI Taxonomy" id="284590"/>
    <lineage>
        <taxon>Eukaryota</taxon>
        <taxon>Fungi</taxon>
        <taxon>Dikarya</taxon>
        <taxon>Ascomycota</taxon>
        <taxon>Saccharomycotina</taxon>
        <taxon>Saccharomycetes</taxon>
        <taxon>Saccharomycetales</taxon>
        <taxon>Saccharomycetaceae</taxon>
        <taxon>Kluyveromyces</taxon>
    </lineage>
</organism>
<keyword id="KW-0002">3D-structure</keyword>
<keyword id="KW-0137">Centromere</keyword>
<keyword id="KW-0158">Chromosome</keyword>
<keyword id="KW-0238">DNA-binding</keyword>
<keyword id="KW-0544">Nucleosome core</keyword>
<keyword id="KW-0539">Nucleus</keyword>
<keyword id="KW-1185">Reference proteome</keyword>
<keyword id="KW-0832">Ubl conjugation</keyword>